<name>TPM_CORAP</name>
<protein>
    <recommendedName>
        <fullName>Tropomyosin</fullName>
    </recommendedName>
    <allergenName>Hel as 1</allergenName>
</protein>
<accession>O97192</accession>
<sequence>MDAIKKKMLAMKMEKENALDRAEQVEQKLRDCECNKNKVEEDLNNLQKKFAILENDFDSINEQLLDANTKLEASEKKNAEIESETAGLQRRIQLLEEDLERSEERLQSATEKLEEASKAADESERGRKVLESRSLADDERLDGLEAQLKEAKYIAEDAERKFDEAARKLAITEVDLERAEARLEAAEAKILELEEELKVVGNNMKSLEISEQEASQREDSYEETIRDLTQRLKDAENRASEAERTVSKLQKEVDRLEDELLAEKERYKATSDELDSTFAELAGY</sequence>
<feature type="chain" id="PRO_0000205667" description="Tropomyosin">
    <location>
        <begin position="1"/>
        <end position="284"/>
    </location>
</feature>
<feature type="region of interest" description="Disordered" evidence="2">
    <location>
        <begin position="105"/>
        <end position="131"/>
    </location>
</feature>
<feature type="coiled-coil region" evidence="1">
    <location>
        <begin position="1"/>
        <end position="284"/>
    </location>
</feature>
<organism>
    <name type="scientific">Cornu aspersum</name>
    <name type="common">Brown garden snail</name>
    <name type="synonym">Helix aspersa</name>
    <dbReference type="NCBI Taxonomy" id="6535"/>
    <lineage>
        <taxon>Eukaryota</taxon>
        <taxon>Metazoa</taxon>
        <taxon>Spiralia</taxon>
        <taxon>Lophotrochozoa</taxon>
        <taxon>Mollusca</taxon>
        <taxon>Gastropoda</taxon>
        <taxon>Heterobranchia</taxon>
        <taxon>Euthyneura</taxon>
        <taxon>Panpulmonata</taxon>
        <taxon>Eupulmonata</taxon>
        <taxon>Stylommatophora</taxon>
        <taxon>Helicina</taxon>
        <taxon>Helicoidea</taxon>
        <taxon>Helicidae</taxon>
        <taxon>Cornu</taxon>
        <taxon>Cornu</taxon>
    </lineage>
</organism>
<dbReference type="EMBL" id="Y14855">
    <property type="protein sequence ID" value="CAB38044.1"/>
    <property type="molecule type" value="mRNA"/>
</dbReference>
<dbReference type="SMR" id="O97192"/>
<dbReference type="Allergome" id="3309">
    <property type="allergen name" value="Hel as 1.0101"/>
</dbReference>
<dbReference type="Allergome" id="378">
    <property type="allergen name" value="Hel as 1"/>
</dbReference>
<dbReference type="FunFam" id="1.20.5.170:FF:000005">
    <property type="entry name" value="Tropomyosin alpha-1 chain"/>
    <property type="match status" value="1"/>
</dbReference>
<dbReference type="FunFam" id="1.20.5.170:FF:000001">
    <property type="entry name" value="Tropomyosin alpha-1 chain isoform 1"/>
    <property type="match status" value="1"/>
</dbReference>
<dbReference type="FunFam" id="1.20.5.340:FF:000001">
    <property type="entry name" value="Tropomyosin alpha-1 chain isoform 2"/>
    <property type="match status" value="1"/>
</dbReference>
<dbReference type="Gene3D" id="1.20.5.170">
    <property type="match status" value="2"/>
</dbReference>
<dbReference type="Gene3D" id="1.20.5.340">
    <property type="match status" value="1"/>
</dbReference>
<dbReference type="InterPro" id="IPR000533">
    <property type="entry name" value="Tropomyosin"/>
</dbReference>
<dbReference type="PANTHER" id="PTHR19269">
    <property type="entry name" value="TROPOMYOSIN"/>
    <property type="match status" value="1"/>
</dbReference>
<dbReference type="Pfam" id="PF00261">
    <property type="entry name" value="Tropomyosin"/>
    <property type="match status" value="1"/>
</dbReference>
<dbReference type="PRINTS" id="PR00194">
    <property type="entry name" value="TROPOMYOSIN"/>
</dbReference>
<dbReference type="SUPFAM" id="SSF57997">
    <property type="entry name" value="Tropomyosin"/>
    <property type="match status" value="1"/>
</dbReference>
<keyword id="KW-0020">Allergen</keyword>
<keyword id="KW-0175">Coiled coil</keyword>
<keyword id="KW-0677">Repeat</keyword>
<comment type="function">
    <text>Tropomyosin, in association with the troponin complex, plays a central role in the calcium dependent regulation of muscle contraction.</text>
</comment>
<comment type="subunit">
    <text evidence="1">Homodimer.</text>
</comment>
<comment type="domain">
    <text>The molecule is in a coiled coil structure that is formed by 2 polypeptide chains. The sequence exhibits a prominent seven-residues periodicity.</text>
</comment>
<comment type="allergen">
    <text>Causes an allergic reaction in human.</text>
</comment>
<comment type="similarity">
    <text evidence="3">Belongs to the tropomyosin family.</text>
</comment>
<proteinExistence type="evidence at protein level"/>
<reference key="1">
    <citation type="journal article" date="2002" name="Int. Arch. Allergy Immunol.">
        <title>Cloning, isolation, and IgE-binding properties of Helix aspersa (brown garden snail) tropomyosin.</title>
        <authorList>
            <person name="Asturias J.A."/>
            <person name="Eraso E."/>
            <person name="Arilla M.C."/>
            <person name="Gomez-Bayon N."/>
            <person name="Inacio F."/>
            <person name="Martinez A."/>
        </authorList>
    </citation>
    <scope>NUCLEOTIDE SEQUENCE [MRNA]</scope>
</reference>
<evidence type="ECO:0000250" key="1"/>
<evidence type="ECO:0000256" key="2">
    <source>
        <dbReference type="SAM" id="MobiDB-lite"/>
    </source>
</evidence>
<evidence type="ECO:0000305" key="3"/>